<comment type="function">
    <text evidence="1">DNA-dependent RNA polymerase catalyzes the transcription of DNA into RNA using the four ribonucleoside triphosphates as substrates.</text>
</comment>
<comment type="catalytic activity">
    <reaction evidence="1">
        <text>RNA(n) + a ribonucleoside 5'-triphosphate = RNA(n+1) + diphosphate</text>
        <dbReference type="Rhea" id="RHEA:21248"/>
        <dbReference type="Rhea" id="RHEA-COMP:14527"/>
        <dbReference type="Rhea" id="RHEA-COMP:17342"/>
        <dbReference type="ChEBI" id="CHEBI:33019"/>
        <dbReference type="ChEBI" id="CHEBI:61557"/>
        <dbReference type="ChEBI" id="CHEBI:140395"/>
        <dbReference type="EC" id="2.7.7.6"/>
    </reaction>
</comment>
<comment type="subunit">
    <text evidence="1">Homodimer. The RNAP catalytic core consists of 2 alpha, 1 beta, 1 beta' and 1 omega subunit. When a sigma factor is associated with the core the holoenzyme is formed, which can initiate transcription.</text>
</comment>
<comment type="domain">
    <text evidence="1">The N-terminal domain is essential for RNAP assembly and basal transcription, whereas the C-terminal domain is involved in interaction with transcriptional regulators and with upstream promoter elements.</text>
</comment>
<comment type="similarity">
    <text evidence="1">Belongs to the RNA polymerase alpha chain family.</text>
</comment>
<comment type="sequence caution" evidence="2">
    <conflict type="erroneous initiation">
        <sequence resource="EMBL-CDS" id="AAP56978"/>
    </conflict>
</comment>
<organism>
    <name type="scientific">Mycoplasmoides gallisepticum (strain R(low / passage 15 / clone 2))</name>
    <name type="common">Mycoplasma gallisepticum</name>
    <dbReference type="NCBI Taxonomy" id="710127"/>
    <lineage>
        <taxon>Bacteria</taxon>
        <taxon>Bacillati</taxon>
        <taxon>Mycoplasmatota</taxon>
        <taxon>Mycoplasmoidales</taxon>
        <taxon>Mycoplasmoidaceae</taxon>
        <taxon>Mycoplasmoides</taxon>
    </lineage>
</organism>
<accession>Q9RDV6</accession>
<feature type="chain" id="PRO_0000175335" description="DNA-directed RNA polymerase subunit alpha">
    <location>
        <begin position="1"/>
        <end position="325"/>
    </location>
</feature>
<feature type="region of interest" description="Alpha N-terminal domain (alpha-NTD)" evidence="1">
    <location>
        <begin position="1"/>
        <end position="239"/>
    </location>
</feature>
<feature type="region of interest" description="Alpha C-terminal domain (alpha-CTD)" evidence="1">
    <location>
        <begin position="255"/>
        <end position="325"/>
    </location>
</feature>
<sequence>MQQFLRYNINVIKEDNDKNYGKYIVKPLEKGFGITLGNALRRVMLSHLPGSSVFALKIKGISHEFGFIPGVKEDVTQIILNIKNLVVWISDNMITDETLSETPIEKWPVMTIRANKAGIIKAGDIECPLGFEVFNKDLEICTLSEDAEVAIDIYATRGRGFKTAAENRSEIGSLSIIPIDSNFNPIIKVGYHVEEETSDVITDKLIIEVGTNGLIKSGDAIAIASKILSDHLKPLIDINKSLHDIQVLNEKNVEEKNKKLSIPIEQLDLTVRSYNCLKRHGIQTVEELVTRSKSEIENIRNLGKKSVREINKKLSELYDLKLKNN</sequence>
<protein>
    <recommendedName>
        <fullName evidence="1">DNA-directed RNA polymerase subunit alpha</fullName>
        <shortName evidence="1">RNAP subunit alpha</shortName>
        <ecNumber evidence="1">2.7.7.6</ecNumber>
    </recommendedName>
    <alternativeName>
        <fullName evidence="1">RNA polymerase subunit alpha</fullName>
    </alternativeName>
    <alternativeName>
        <fullName evidence="1">Transcriptase subunit alpha</fullName>
    </alternativeName>
</protein>
<evidence type="ECO:0000255" key="1">
    <source>
        <dbReference type="HAMAP-Rule" id="MF_00059"/>
    </source>
</evidence>
<evidence type="ECO:0000305" key="2"/>
<reference key="1">
    <citation type="journal article" date="2002" name="FEMS Microbiol. Lett.">
        <title>Mycoplasma gallisepticum rpoA gene cluster.</title>
        <authorList>
            <person name="Skamrov A.V."/>
            <person name="Feoktistova E.S."/>
            <person name="Gol'dman M.A."/>
            <person name="Bibilashvili R.S."/>
        </authorList>
    </citation>
    <scope>NUCLEOTIDE SEQUENCE [GENOMIC DNA]</scope>
    <source>
        <strain>A5969Var.B</strain>
    </source>
</reference>
<reference key="2">
    <citation type="journal article" date="2003" name="Microbiology">
        <title>The complete genome sequence of the avian pathogen Mycoplasma gallisepticum strain R(low).</title>
        <authorList>
            <person name="Papazisi L."/>
            <person name="Gorton T.S."/>
            <person name="Kutish G."/>
            <person name="Markham P.F."/>
            <person name="Browning G.F."/>
            <person name="Nguyen D.K."/>
            <person name="Swartzell S."/>
            <person name="Madan A."/>
            <person name="Mahairas G."/>
            <person name="Geary S.J."/>
        </authorList>
    </citation>
    <scope>NUCLEOTIDE SEQUENCE [LARGE SCALE GENOMIC DNA]</scope>
    <source>
        <strain>R(low / passage 15 / clone 2)</strain>
    </source>
</reference>
<proteinExistence type="inferred from homology"/>
<name>RPOA_MYCGA</name>
<dbReference type="EC" id="2.7.7.6" evidence="1"/>
<dbReference type="EMBL" id="L35043">
    <property type="protein sequence ID" value="AAF19039.2"/>
    <property type="molecule type" value="Genomic_DNA"/>
</dbReference>
<dbReference type="EMBL" id="AE015450">
    <property type="protein sequence ID" value="AAP56978.1"/>
    <property type="status" value="ALT_INIT"/>
    <property type="molecule type" value="Genomic_DNA"/>
</dbReference>
<dbReference type="RefSeq" id="WP_011883401.1">
    <property type="nucleotide sequence ID" value="NC_004829.2"/>
</dbReference>
<dbReference type="SMR" id="Q9RDV6"/>
<dbReference type="KEGG" id="mga:MGA_0443"/>
<dbReference type="HOGENOM" id="CLU_053084_0_1_14"/>
<dbReference type="Proteomes" id="UP000001418">
    <property type="component" value="Chromosome"/>
</dbReference>
<dbReference type="GO" id="GO:0005737">
    <property type="term" value="C:cytoplasm"/>
    <property type="evidence" value="ECO:0007669"/>
    <property type="project" value="UniProtKB-ARBA"/>
</dbReference>
<dbReference type="GO" id="GO:0000428">
    <property type="term" value="C:DNA-directed RNA polymerase complex"/>
    <property type="evidence" value="ECO:0007669"/>
    <property type="project" value="UniProtKB-KW"/>
</dbReference>
<dbReference type="GO" id="GO:0003677">
    <property type="term" value="F:DNA binding"/>
    <property type="evidence" value="ECO:0007669"/>
    <property type="project" value="UniProtKB-UniRule"/>
</dbReference>
<dbReference type="GO" id="GO:0003899">
    <property type="term" value="F:DNA-directed RNA polymerase activity"/>
    <property type="evidence" value="ECO:0007669"/>
    <property type="project" value="UniProtKB-UniRule"/>
</dbReference>
<dbReference type="GO" id="GO:0046983">
    <property type="term" value="F:protein dimerization activity"/>
    <property type="evidence" value="ECO:0007669"/>
    <property type="project" value="InterPro"/>
</dbReference>
<dbReference type="GO" id="GO:0006351">
    <property type="term" value="P:DNA-templated transcription"/>
    <property type="evidence" value="ECO:0007669"/>
    <property type="project" value="UniProtKB-UniRule"/>
</dbReference>
<dbReference type="CDD" id="cd06928">
    <property type="entry name" value="RNAP_alpha_NTD"/>
    <property type="match status" value="1"/>
</dbReference>
<dbReference type="FunFam" id="2.170.120.12:FF:000001">
    <property type="entry name" value="DNA-directed RNA polymerase subunit alpha"/>
    <property type="match status" value="1"/>
</dbReference>
<dbReference type="Gene3D" id="1.10.150.20">
    <property type="entry name" value="5' to 3' exonuclease, C-terminal subdomain"/>
    <property type="match status" value="1"/>
</dbReference>
<dbReference type="Gene3D" id="2.170.120.12">
    <property type="entry name" value="DNA-directed RNA polymerase, insert domain"/>
    <property type="match status" value="1"/>
</dbReference>
<dbReference type="Gene3D" id="3.30.1360.10">
    <property type="entry name" value="RNA polymerase, RBP11-like subunit"/>
    <property type="match status" value="1"/>
</dbReference>
<dbReference type="HAMAP" id="MF_00059">
    <property type="entry name" value="RNApol_bact_RpoA"/>
    <property type="match status" value="1"/>
</dbReference>
<dbReference type="InterPro" id="IPR011262">
    <property type="entry name" value="DNA-dir_RNA_pol_insert"/>
</dbReference>
<dbReference type="InterPro" id="IPR011263">
    <property type="entry name" value="DNA-dir_RNA_pol_RpoA/D/Rpb3"/>
</dbReference>
<dbReference type="InterPro" id="IPR011773">
    <property type="entry name" value="DNA-dir_RpoA"/>
</dbReference>
<dbReference type="InterPro" id="IPR036603">
    <property type="entry name" value="RBP11-like"/>
</dbReference>
<dbReference type="InterPro" id="IPR011260">
    <property type="entry name" value="RNAP_asu_C"/>
</dbReference>
<dbReference type="InterPro" id="IPR036643">
    <property type="entry name" value="RNApol_insert_sf"/>
</dbReference>
<dbReference type="NCBIfam" id="NF003519">
    <property type="entry name" value="PRK05182.2-5"/>
    <property type="match status" value="1"/>
</dbReference>
<dbReference type="NCBIfam" id="TIGR02027">
    <property type="entry name" value="rpoA"/>
    <property type="match status" value="1"/>
</dbReference>
<dbReference type="Pfam" id="PF01000">
    <property type="entry name" value="RNA_pol_A_bac"/>
    <property type="match status" value="1"/>
</dbReference>
<dbReference type="Pfam" id="PF03118">
    <property type="entry name" value="RNA_pol_A_CTD"/>
    <property type="match status" value="1"/>
</dbReference>
<dbReference type="Pfam" id="PF01193">
    <property type="entry name" value="RNA_pol_L"/>
    <property type="match status" value="1"/>
</dbReference>
<dbReference type="SMART" id="SM00662">
    <property type="entry name" value="RPOLD"/>
    <property type="match status" value="1"/>
</dbReference>
<dbReference type="SUPFAM" id="SSF47789">
    <property type="entry name" value="C-terminal domain of RNA polymerase alpha subunit"/>
    <property type="match status" value="1"/>
</dbReference>
<dbReference type="SUPFAM" id="SSF56553">
    <property type="entry name" value="Insert subdomain of RNA polymerase alpha subunit"/>
    <property type="match status" value="1"/>
</dbReference>
<dbReference type="SUPFAM" id="SSF55257">
    <property type="entry name" value="RBP11-like subunits of RNA polymerase"/>
    <property type="match status" value="1"/>
</dbReference>
<gene>
    <name evidence="1" type="primary">rpoA</name>
    <name type="ordered locus">MYCGA6280</name>
    <name type="ORF">MGA_0443</name>
</gene>
<keyword id="KW-0240">DNA-directed RNA polymerase</keyword>
<keyword id="KW-0548">Nucleotidyltransferase</keyword>
<keyword id="KW-1185">Reference proteome</keyword>
<keyword id="KW-0804">Transcription</keyword>
<keyword id="KW-0808">Transferase</keyword>